<keyword id="KW-0067">ATP-binding</keyword>
<keyword id="KW-0436">Ligase</keyword>
<keyword id="KW-0547">Nucleotide-binding</keyword>
<keyword id="KW-1185">Reference proteome</keyword>
<protein>
    <recommendedName>
        <fullName evidence="1">Putative glutamate--cysteine ligase 2</fullName>
        <ecNumber evidence="1">6.3.2.2</ecNumber>
    </recommendedName>
    <alternativeName>
        <fullName evidence="1">Gamma-glutamylcysteine synthetase 2</fullName>
        <shortName evidence="1">GCS 2</shortName>
        <shortName evidence="1">Gamma-GCS 2</shortName>
    </alternativeName>
</protein>
<reference key="1">
    <citation type="journal article" date="2003" name="DNA Res.">
        <title>Complete genome structure of Gloeobacter violaceus PCC 7421, a cyanobacterium that lacks thylakoids.</title>
        <authorList>
            <person name="Nakamura Y."/>
            <person name="Kaneko T."/>
            <person name="Sato S."/>
            <person name="Mimuro M."/>
            <person name="Miyashita H."/>
            <person name="Tsuchiya T."/>
            <person name="Sasamoto S."/>
            <person name="Watanabe A."/>
            <person name="Kawashima K."/>
            <person name="Kishida Y."/>
            <person name="Kiyokawa C."/>
            <person name="Kohara M."/>
            <person name="Matsumoto M."/>
            <person name="Matsuno A."/>
            <person name="Nakazaki N."/>
            <person name="Shimpo S."/>
            <person name="Takeuchi C."/>
            <person name="Yamada M."/>
            <person name="Tabata S."/>
        </authorList>
    </citation>
    <scope>NUCLEOTIDE SEQUENCE [LARGE SCALE GENOMIC DNA]</scope>
    <source>
        <strain>ATCC 29082 / PCC 7421</strain>
    </source>
</reference>
<evidence type="ECO:0000255" key="1">
    <source>
        <dbReference type="HAMAP-Rule" id="MF_01609"/>
    </source>
</evidence>
<organism>
    <name type="scientific">Gloeobacter violaceus (strain ATCC 29082 / PCC 7421)</name>
    <dbReference type="NCBI Taxonomy" id="251221"/>
    <lineage>
        <taxon>Bacteria</taxon>
        <taxon>Bacillati</taxon>
        <taxon>Cyanobacteriota</taxon>
        <taxon>Cyanophyceae</taxon>
        <taxon>Gloeobacterales</taxon>
        <taxon>Gloeobacteraceae</taxon>
        <taxon>Gloeobacter</taxon>
    </lineage>
</organism>
<feature type="chain" id="PRO_0000218199" description="Putative glutamate--cysteine ligase 2">
    <location>
        <begin position="1"/>
        <end position="372"/>
    </location>
</feature>
<sequence length="372" mass="41518">MTIPFQSSTAPTLGVEMELQIIDPATGNLTPRGPELVTFCEEHPEVGLVVKPELVQATIEINTGICKDVAQVERDLTTQLTLLRSVCRERGVSFLSAGTHPFARWRERRYTQTPRYRALVDKHVWTARRMQIYGLHVHVGMPDGDTAIQVINQITQYAPMLLALSANSPFWEGDDTGLDSCRTKVFENLSSAGLPFRFENWEGYENLINVLLETGSIGSQREIWWDIRPHSDFGTIEVRICDATRTLAEVLALTALVQCLAVYFRRLYENGEEIRLLHPGIIRENKWRACRWGLEGELIDPLTLKGVPTRKLIEQTVGEMQSLAAELGCSAYLAAIPAILASGNGATRQRRIYSQSRSLVAVVADLEAGLAT</sequence>
<accession>Q7NI89</accession>
<proteinExistence type="inferred from homology"/>
<dbReference type="EC" id="6.3.2.2" evidence="1"/>
<dbReference type="EMBL" id="BA000045">
    <property type="protein sequence ID" value="BAC90235.1"/>
    <property type="molecule type" value="Genomic_DNA"/>
</dbReference>
<dbReference type="RefSeq" id="NP_925240.1">
    <property type="nucleotide sequence ID" value="NC_005125.1"/>
</dbReference>
<dbReference type="RefSeq" id="WP_011142291.1">
    <property type="nucleotide sequence ID" value="NC_005125.1"/>
</dbReference>
<dbReference type="SMR" id="Q7NI89"/>
<dbReference type="FunCoup" id="Q7NI89">
    <property type="interactions" value="8"/>
</dbReference>
<dbReference type="STRING" id="251221.gene:10759789"/>
<dbReference type="EnsemblBacteria" id="BAC90235">
    <property type="protein sequence ID" value="BAC90235"/>
    <property type="gene ID" value="BAC90235"/>
</dbReference>
<dbReference type="KEGG" id="gvi:gll2294"/>
<dbReference type="PATRIC" id="fig|251221.4.peg.2329"/>
<dbReference type="eggNOG" id="COG2170">
    <property type="taxonomic scope" value="Bacteria"/>
</dbReference>
<dbReference type="HOGENOM" id="CLU_044848_1_0_3"/>
<dbReference type="InParanoid" id="Q7NI89"/>
<dbReference type="OrthoDB" id="9769628at2"/>
<dbReference type="PhylomeDB" id="Q7NI89"/>
<dbReference type="Proteomes" id="UP000000557">
    <property type="component" value="Chromosome"/>
</dbReference>
<dbReference type="GO" id="GO:0005524">
    <property type="term" value="F:ATP binding"/>
    <property type="evidence" value="ECO:0007669"/>
    <property type="project" value="UniProtKB-KW"/>
</dbReference>
<dbReference type="GO" id="GO:0004357">
    <property type="term" value="F:glutamate-cysteine ligase activity"/>
    <property type="evidence" value="ECO:0007669"/>
    <property type="project" value="UniProtKB-EC"/>
</dbReference>
<dbReference type="GO" id="GO:0016879">
    <property type="term" value="F:ligase activity, forming carbon-nitrogen bonds"/>
    <property type="evidence" value="ECO:0000318"/>
    <property type="project" value="GO_Central"/>
</dbReference>
<dbReference type="GO" id="GO:0042398">
    <property type="term" value="P:modified amino acid biosynthetic process"/>
    <property type="evidence" value="ECO:0007669"/>
    <property type="project" value="InterPro"/>
</dbReference>
<dbReference type="Gene3D" id="3.30.590.20">
    <property type="match status" value="1"/>
</dbReference>
<dbReference type="HAMAP" id="MF_01609">
    <property type="entry name" value="Glu_cys_ligase_2"/>
    <property type="match status" value="1"/>
</dbReference>
<dbReference type="InterPro" id="IPR050141">
    <property type="entry name" value="GCL_type2/YbdK_subfam"/>
</dbReference>
<dbReference type="InterPro" id="IPR006336">
    <property type="entry name" value="GCS2"/>
</dbReference>
<dbReference type="InterPro" id="IPR014746">
    <property type="entry name" value="Gln_synth/guanido_kin_cat_dom"/>
</dbReference>
<dbReference type="InterPro" id="IPR011793">
    <property type="entry name" value="YbdK"/>
</dbReference>
<dbReference type="NCBIfam" id="TIGR02050">
    <property type="entry name" value="gshA_cyan_rel"/>
    <property type="match status" value="1"/>
</dbReference>
<dbReference type="PANTHER" id="PTHR36510">
    <property type="entry name" value="GLUTAMATE--CYSTEINE LIGASE 2-RELATED"/>
    <property type="match status" value="1"/>
</dbReference>
<dbReference type="PANTHER" id="PTHR36510:SF1">
    <property type="entry name" value="GLUTAMATE--CYSTEINE LIGASE 2-RELATED"/>
    <property type="match status" value="1"/>
</dbReference>
<dbReference type="Pfam" id="PF04107">
    <property type="entry name" value="GCS2"/>
    <property type="match status" value="1"/>
</dbReference>
<dbReference type="SUPFAM" id="SSF55931">
    <property type="entry name" value="Glutamine synthetase/guanido kinase"/>
    <property type="match status" value="1"/>
</dbReference>
<comment type="function">
    <text evidence="1">ATP-dependent carboxylate-amine ligase which exhibits weak glutamate--cysteine ligase activity.</text>
</comment>
<comment type="catalytic activity">
    <reaction evidence="1">
        <text>L-cysteine + L-glutamate + ATP = gamma-L-glutamyl-L-cysteine + ADP + phosphate + H(+)</text>
        <dbReference type="Rhea" id="RHEA:13285"/>
        <dbReference type="ChEBI" id="CHEBI:15378"/>
        <dbReference type="ChEBI" id="CHEBI:29985"/>
        <dbReference type="ChEBI" id="CHEBI:30616"/>
        <dbReference type="ChEBI" id="CHEBI:35235"/>
        <dbReference type="ChEBI" id="CHEBI:43474"/>
        <dbReference type="ChEBI" id="CHEBI:58173"/>
        <dbReference type="ChEBI" id="CHEBI:456216"/>
        <dbReference type="EC" id="6.3.2.2"/>
    </reaction>
</comment>
<comment type="similarity">
    <text evidence="1">Belongs to the glutamate--cysteine ligase type 2 family. YbdK subfamily.</text>
</comment>
<name>GCS2_GLOVI</name>
<gene>
    <name type="ordered locus">gll2294</name>
</gene>